<protein>
    <recommendedName>
        <fullName evidence="1">Small ribosomal subunit protein uS17</fullName>
    </recommendedName>
    <alternativeName>
        <fullName evidence="2">30S ribosomal protein S17</fullName>
    </alternativeName>
</protein>
<gene>
    <name evidence="1" type="primary">rpsQ</name>
    <name type="ordered locus">SSA_0116</name>
</gene>
<sequence length="86" mass="10011">MERNNRKVLVGRVVSDKMDKTITVVVETKRNHPVYGKRINYSKKYKAHDENNVAKEGDIVRIMETRPLSATKRFRLVEVVEEAVII</sequence>
<name>RS17_STRSV</name>
<proteinExistence type="inferred from homology"/>
<organism>
    <name type="scientific">Streptococcus sanguinis (strain SK36)</name>
    <dbReference type="NCBI Taxonomy" id="388919"/>
    <lineage>
        <taxon>Bacteria</taxon>
        <taxon>Bacillati</taxon>
        <taxon>Bacillota</taxon>
        <taxon>Bacilli</taxon>
        <taxon>Lactobacillales</taxon>
        <taxon>Streptococcaceae</taxon>
        <taxon>Streptococcus</taxon>
    </lineage>
</organism>
<reference key="1">
    <citation type="journal article" date="2007" name="J. Bacteriol.">
        <title>Genome of the opportunistic pathogen Streptococcus sanguinis.</title>
        <authorList>
            <person name="Xu P."/>
            <person name="Alves J.M."/>
            <person name="Kitten T."/>
            <person name="Brown A."/>
            <person name="Chen Z."/>
            <person name="Ozaki L.S."/>
            <person name="Manque P."/>
            <person name="Ge X."/>
            <person name="Serrano M.G."/>
            <person name="Puiu D."/>
            <person name="Hendricks S."/>
            <person name="Wang Y."/>
            <person name="Chaplin M.D."/>
            <person name="Akan D."/>
            <person name="Paik S."/>
            <person name="Peterson D.L."/>
            <person name="Macrina F.L."/>
            <person name="Buck G.A."/>
        </authorList>
    </citation>
    <scope>NUCLEOTIDE SEQUENCE [LARGE SCALE GENOMIC DNA]</scope>
    <source>
        <strain>SK36</strain>
    </source>
</reference>
<dbReference type="EMBL" id="CP000387">
    <property type="protein sequence ID" value="ABN43577.1"/>
    <property type="molecule type" value="Genomic_DNA"/>
</dbReference>
<dbReference type="RefSeq" id="WP_000440801.1">
    <property type="nucleotide sequence ID" value="NZ_CAXTYR010000005.1"/>
</dbReference>
<dbReference type="RefSeq" id="YP_001034127.1">
    <property type="nucleotide sequence ID" value="NC_009009.1"/>
</dbReference>
<dbReference type="SMR" id="A3CK72"/>
<dbReference type="STRING" id="388919.SSA_0116"/>
<dbReference type="GeneID" id="93920913"/>
<dbReference type="KEGG" id="ssa:SSA_0116"/>
<dbReference type="PATRIC" id="fig|388919.9.peg.109"/>
<dbReference type="eggNOG" id="COG0186">
    <property type="taxonomic scope" value="Bacteria"/>
</dbReference>
<dbReference type="HOGENOM" id="CLU_073626_1_0_9"/>
<dbReference type="OrthoDB" id="9811714at2"/>
<dbReference type="PRO" id="PR:A3CK72"/>
<dbReference type="Proteomes" id="UP000002148">
    <property type="component" value="Chromosome"/>
</dbReference>
<dbReference type="GO" id="GO:0022627">
    <property type="term" value="C:cytosolic small ribosomal subunit"/>
    <property type="evidence" value="ECO:0007669"/>
    <property type="project" value="TreeGrafter"/>
</dbReference>
<dbReference type="GO" id="GO:0019843">
    <property type="term" value="F:rRNA binding"/>
    <property type="evidence" value="ECO:0007669"/>
    <property type="project" value="UniProtKB-UniRule"/>
</dbReference>
<dbReference type="GO" id="GO:0003735">
    <property type="term" value="F:structural constituent of ribosome"/>
    <property type="evidence" value="ECO:0007669"/>
    <property type="project" value="InterPro"/>
</dbReference>
<dbReference type="GO" id="GO:0006412">
    <property type="term" value="P:translation"/>
    <property type="evidence" value="ECO:0007669"/>
    <property type="project" value="UniProtKB-UniRule"/>
</dbReference>
<dbReference type="CDD" id="cd00364">
    <property type="entry name" value="Ribosomal_uS17"/>
    <property type="match status" value="1"/>
</dbReference>
<dbReference type="FunFam" id="2.40.50.140:FF:000026">
    <property type="entry name" value="30S ribosomal protein S17"/>
    <property type="match status" value="1"/>
</dbReference>
<dbReference type="Gene3D" id="2.40.50.140">
    <property type="entry name" value="Nucleic acid-binding proteins"/>
    <property type="match status" value="1"/>
</dbReference>
<dbReference type="HAMAP" id="MF_01345_B">
    <property type="entry name" value="Ribosomal_uS17_B"/>
    <property type="match status" value="1"/>
</dbReference>
<dbReference type="InterPro" id="IPR012340">
    <property type="entry name" value="NA-bd_OB-fold"/>
</dbReference>
<dbReference type="InterPro" id="IPR000266">
    <property type="entry name" value="Ribosomal_uS17"/>
</dbReference>
<dbReference type="InterPro" id="IPR019984">
    <property type="entry name" value="Ribosomal_uS17_bact/chlr"/>
</dbReference>
<dbReference type="InterPro" id="IPR019979">
    <property type="entry name" value="Ribosomal_uS17_CS"/>
</dbReference>
<dbReference type="NCBIfam" id="NF004123">
    <property type="entry name" value="PRK05610.1"/>
    <property type="match status" value="1"/>
</dbReference>
<dbReference type="NCBIfam" id="TIGR03635">
    <property type="entry name" value="uS17_bact"/>
    <property type="match status" value="1"/>
</dbReference>
<dbReference type="PANTHER" id="PTHR10744">
    <property type="entry name" value="40S RIBOSOMAL PROTEIN S11 FAMILY MEMBER"/>
    <property type="match status" value="1"/>
</dbReference>
<dbReference type="PANTHER" id="PTHR10744:SF1">
    <property type="entry name" value="SMALL RIBOSOMAL SUBUNIT PROTEIN US17M"/>
    <property type="match status" value="1"/>
</dbReference>
<dbReference type="Pfam" id="PF00366">
    <property type="entry name" value="Ribosomal_S17"/>
    <property type="match status" value="1"/>
</dbReference>
<dbReference type="PRINTS" id="PR00973">
    <property type="entry name" value="RIBOSOMALS17"/>
</dbReference>
<dbReference type="SUPFAM" id="SSF50249">
    <property type="entry name" value="Nucleic acid-binding proteins"/>
    <property type="match status" value="1"/>
</dbReference>
<dbReference type="PROSITE" id="PS00056">
    <property type="entry name" value="RIBOSOMAL_S17"/>
    <property type="match status" value="1"/>
</dbReference>
<accession>A3CK72</accession>
<comment type="function">
    <text evidence="1">One of the primary rRNA binding proteins, it binds specifically to the 5'-end of 16S ribosomal RNA.</text>
</comment>
<comment type="subunit">
    <text evidence="1">Part of the 30S ribosomal subunit.</text>
</comment>
<comment type="similarity">
    <text evidence="1">Belongs to the universal ribosomal protein uS17 family.</text>
</comment>
<keyword id="KW-1185">Reference proteome</keyword>
<keyword id="KW-0687">Ribonucleoprotein</keyword>
<keyword id="KW-0689">Ribosomal protein</keyword>
<keyword id="KW-0694">RNA-binding</keyword>
<keyword id="KW-0699">rRNA-binding</keyword>
<evidence type="ECO:0000255" key="1">
    <source>
        <dbReference type="HAMAP-Rule" id="MF_01345"/>
    </source>
</evidence>
<evidence type="ECO:0000305" key="2"/>
<feature type="chain" id="PRO_1000055033" description="Small ribosomal subunit protein uS17">
    <location>
        <begin position="1"/>
        <end position="86"/>
    </location>
</feature>